<keyword id="KW-0963">Cytoplasm</keyword>
<keyword id="KW-0444">Lipid biosynthesis</keyword>
<keyword id="KW-0443">Lipid metabolism</keyword>
<keyword id="KW-0520">NAD</keyword>
<keyword id="KW-0521">NADP</keyword>
<keyword id="KW-0547">Nucleotide-binding</keyword>
<keyword id="KW-0560">Oxidoreductase</keyword>
<keyword id="KW-0594">Phospholipid biosynthesis</keyword>
<keyword id="KW-1208">Phospholipid metabolism</keyword>
<keyword id="KW-1185">Reference proteome</keyword>
<sequence length="332" mass="34530">MANVAVMGAGSWGTTLAKVFADAGNDVRLWARREELAEAINTRHENPDYLPELPLPESIKASTDPATALQSADIVIFGVPSQTLRGNLEKWAPLLPEEATLVSISKGVEKATLNLMSEVIADAAGVSSDRIAVLSGPNLAKEVAQEQPAATVIACSDAARAEAVQHAAAAPYFRPYTNTDVIGAEIGGACKNVIALACGMAAGKGLGNNTMATIITRGLAEITRLGVKLGADPFTFSGLAGMGDLVATCSSTLSRNRTFGYRLGQGGTLEEATAATNGQVAEGVISSDSIFRLAQRADVEMPITQAVYGVCHRGVTVDDMIVALMGRTKKAE</sequence>
<dbReference type="EC" id="1.1.1.94" evidence="1"/>
<dbReference type="EMBL" id="CP001601">
    <property type="protein sequence ID" value="ACP32752.1"/>
    <property type="molecule type" value="Genomic_DNA"/>
</dbReference>
<dbReference type="RefSeq" id="WP_010186852.1">
    <property type="nucleotide sequence ID" value="NC_012590.1"/>
</dbReference>
<dbReference type="SMR" id="C3PFZ8"/>
<dbReference type="STRING" id="548476.cauri_1159"/>
<dbReference type="GeneID" id="31923782"/>
<dbReference type="KEGG" id="car:cauri_1159"/>
<dbReference type="eggNOG" id="COG0240">
    <property type="taxonomic scope" value="Bacteria"/>
</dbReference>
<dbReference type="HOGENOM" id="CLU_033449_0_2_11"/>
<dbReference type="OrthoDB" id="9812273at2"/>
<dbReference type="UniPathway" id="UPA00940"/>
<dbReference type="Proteomes" id="UP000002077">
    <property type="component" value="Chromosome"/>
</dbReference>
<dbReference type="GO" id="GO:0005829">
    <property type="term" value="C:cytosol"/>
    <property type="evidence" value="ECO:0007669"/>
    <property type="project" value="TreeGrafter"/>
</dbReference>
<dbReference type="GO" id="GO:0047952">
    <property type="term" value="F:glycerol-3-phosphate dehydrogenase [NAD(P)+] activity"/>
    <property type="evidence" value="ECO:0007669"/>
    <property type="project" value="UniProtKB-UniRule"/>
</dbReference>
<dbReference type="GO" id="GO:0051287">
    <property type="term" value="F:NAD binding"/>
    <property type="evidence" value="ECO:0007669"/>
    <property type="project" value="InterPro"/>
</dbReference>
<dbReference type="GO" id="GO:0005975">
    <property type="term" value="P:carbohydrate metabolic process"/>
    <property type="evidence" value="ECO:0007669"/>
    <property type="project" value="InterPro"/>
</dbReference>
<dbReference type="GO" id="GO:0046167">
    <property type="term" value="P:glycerol-3-phosphate biosynthetic process"/>
    <property type="evidence" value="ECO:0007669"/>
    <property type="project" value="UniProtKB-UniRule"/>
</dbReference>
<dbReference type="GO" id="GO:0046168">
    <property type="term" value="P:glycerol-3-phosphate catabolic process"/>
    <property type="evidence" value="ECO:0007669"/>
    <property type="project" value="InterPro"/>
</dbReference>
<dbReference type="GO" id="GO:0006650">
    <property type="term" value="P:glycerophospholipid metabolic process"/>
    <property type="evidence" value="ECO:0007669"/>
    <property type="project" value="UniProtKB-UniRule"/>
</dbReference>
<dbReference type="GO" id="GO:0008654">
    <property type="term" value="P:phospholipid biosynthetic process"/>
    <property type="evidence" value="ECO:0007669"/>
    <property type="project" value="UniProtKB-KW"/>
</dbReference>
<dbReference type="FunFam" id="1.10.1040.10:FF:000001">
    <property type="entry name" value="Glycerol-3-phosphate dehydrogenase [NAD(P)+]"/>
    <property type="match status" value="1"/>
</dbReference>
<dbReference type="FunFam" id="3.40.50.720:FF:000019">
    <property type="entry name" value="Glycerol-3-phosphate dehydrogenase [NAD(P)+]"/>
    <property type="match status" value="1"/>
</dbReference>
<dbReference type="Gene3D" id="1.10.1040.10">
    <property type="entry name" value="N-(1-d-carboxylethyl)-l-norvaline Dehydrogenase, domain 2"/>
    <property type="match status" value="1"/>
</dbReference>
<dbReference type="Gene3D" id="3.40.50.720">
    <property type="entry name" value="NAD(P)-binding Rossmann-like Domain"/>
    <property type="match status" value="1"/>
</dbReference>
<dbReference type="HAMAP" id="MF_00394">
    <property type="entry name" value="NAD_Glyc3P_dehydrog"/>
    <property type="match status" value="1"/>
</dbReference>
<dbReference type="InterPro" id="IPR008927">
    <property type="entry name" value="6-PGluconate_DH-like_C_sf"/>
</dbReference>
<dbReference type="InterPro" id="IPR013328">
    <property type="entry name" value="6PGD_dom2"/>
</dbReference>
<dbReference type="InterPro" id="IPR006168">
    <property type="entry name" value="G3P_DH_NAD-dep"/>
</dbReference>
<dbReference type="InterPro" id="IPR006109">
    <property type="entry name" value="G3P_DH_NAD-dep_C"/>
</dbReference>
<dbReference type="InterPro" id="IPR011128">
    <property type="entry name" value="G3P_DH_NAD-dep_N"/>
</dbReference>
<dbReference type="InterPro" id="IPR036291">
    <property type="entry name" value="NAD(P)-bd_dom_sf"/>
</dbReference>
<dbReference type="NCBIfam" id="NF000940">
    <property type="entry name" value="PRK00094.1-2"/>
    <property type="match status" value="1"/>
</dbReference>
<dbReference type="NCBIfam" id="NF000942">
    <property type="entry name" value="PRK00094.1-4"/>
    <property type="match status" value="1"/>
</dbReference>
<dbReference type="PANTHER" id="PTHR11728">
    <property type="entry name" value="GLYCEROL-3-PHOSPHATE DEHYDROGENASE"/>
    <property type="match status" value="1"/>
</dbReference>
<dbReference type="PANTHER" id="PTHR11728:SF1">
    <property type="entry name" value="GLYCEROL-3-PHOSPHATE DEHYDROGENASE [NAD(+)] 2, CHLOROPLASTIC"/>
    <property type="match status" value="1"/>
</dbReference>
<dbReference type="Pfam" id="PF07479">
    <property type="entry name" value="NAD_Gly3P_dh_C"/>
    <property type="match status" value="1"/>
</dbReference>
<dbReference type="Pfam" id="PF01210">
    <property type="entry name" value="NAD_Gly3P_dh_N"/>
    <property type="match status" value="1"/>
</dbReference>
<dbReference type="PIRSF" id="PIRSF000114">
    <property type="entry name" value="Glycerol-3-P_dh"/>
    <property type="match status" value="1"/>
</dbReference>
<dbReference type="PRINTS" id="PR00077">
    <property type="entry name" value="GPDHDRGNASE"/>
</dbReference>
<dbReference type="SUPFAM" id="SSF48179">
    <property type="entry name" value="6-phosphogluconate dehydrogenase C-terminal domain-like"/>
    <property type="match status" value="1"/>
</dbReference>
<dbReference type="SUPFAM" id="SSF51735">
    <property type="entry name" value="NAD(P)-binding Rossmann-fold domains"/>
    <property type="match status" value="1"/>
</dbReference>
<dbReference type="PROSITE" id="PS00957">
    <property type="entry name" value="NAD_G3PDH"/>
    <property type="match status" value="1"/>
</dbReference>
<reference key="1">
    <citation type="journal article" date="2010" name="BMC Genomics">
        <title>Complete genome sequence and lifestyle of black-pigmented Corynebacterium aurimucosum ATCC 700975 (formerly C. nigricans CN-1) isolated from a vaginal swab of a woman with spontaneous abortion.</title>
        <authorList>
            <person name="Trost E."/>
            <person name="Gotker S."/>
            <person name="Schneider J."/>
            <person name="Schneiker-Bekel S."/>
            <person name="Szczepanowski R."/>
            <person name="Tilker A."/>
            <person name="Viehoever P."/>
            <person name="Arnold W."/>
            <person name="Bekel T."/>
            <person name="Blom J."/>
            <person name="Gartemann K.H."/>
            <person name="Linke B."/>
            <person name="Goesmann A."/>
            <person name="Puhler A."/>
            <person name="Shukla S.K."/>
            <person name="Tauch A."/>
        </authorList>
    </citation>
    <scope>NUCLEOTIDE SEQUENCE [LARGE SCALE GENOMIC DNA]</scope>
    <source>
        <strain>ATCC 700975 / DSM 44827 / CIP 107346 / CN-1</strain>
    </source>
</reference>
<organism>
    <name type="scientific">Corynebacterium aurimucosum (strain ATCC 700975 / DSM 44827 / CIP 107346 / CN-1)</name>
    <name type="common">Corynebacterium nigricans</name>
    <dbReference type="NCBI Taxonomy" id="548476"/>
    <lineage>
        <taxon>Bacteria</taxon>
        <taxon>Bacillati</taxon>
        <taxon>Actinomycetota</taxon>
        <taxon>Actinomycetes</taxon>
        <taxon>Mycobacteriales</taxon>
        <taxon>Corynebacteriaceae</taxon>
        <taxon>Corynebacterium</taxon>
    </lineage>
</organism>
<accession>C3PFZ8</accession>
<evidence type="ECO:0000255" key="1">
    <source>
        <dbReference type="HAMAP-Rule" id="MF_00394"/>
    </source>
</evidence>
<gene>
    <name evidence="1" type="primary">gpsA</name>
    <name type="ordered locus">cauri_1159</name>
</gene>
<comment type="function">
    <text evidence="1">Catalyzes the reduction of the glycolytic intermediate dihydroxyacetone phosphate (DHAP) to sn-glycerol 3-phosphate (G3P), the key precursor for phospholipid synthesis.</text>
</comment>
<comment type="catalytic activity">
    <reaction evidence="1">
        <text>sn-glycerol 3-phosphate + NAD(+) = dihydroxyacetone phosphate + NADH + H(+)</text>
        <dbReference type="Rhea" id="RHEA:11092"/>
        <dbReference type="ChEBI" id="CHEBI:15378"/>
        <dbReference type="ChEBI" id="CHEBI:57540"/>
        <dbReference type="ChEBI" id="CHEBI:57597"/>
        <dbReference type="ChEBI" id="CHEBI:57642"/>
        <dbReference type="ChEBI" id="CHEBI:57945"/>
        <dbReference type="EC" id="1.1.1.94"/>
    </reaction>
    <physiologicalReaction direction="right-to-left" evidence="1">
        <dbReference type="Rhea" id="RHEA:11094"/>
    </physiologicalReaction>
</comment>
<comment type="catalytic activity">
    <reaction evidence="1">
        <text>sn-glycerol 3-phosphate + NADP(+) = dihydroxyacetone phosphate + NADPH + H(+)</text>
        <dbReference type="Rhea" id="RHEA:11096"/>
        <dbReference type="ChEBI" id="CHEBI:15378"/>
        <dbReference type="ChEBI" id="CHEBI:57597"/>
        <dbReference type="ChEBI" id="CHEBI:57642"/>
        <dbReference type="ChEBI" id="CHEBI:57783"/>
        <dbReference type="ChEBI" id="CHEBI:58349"/>
        <dbReference type="EC" id="1.1.1.94"/>
    </reaction>
    <physiologicalReaction direction="right-to-left" evidence="1">
        <dbReference type="Rhea" id="RHEA:11098"/>
    </physiologicalReaction>
</comment>
<comment type="pathway">
    <text evidence="1">Membrane lipid metabolism; glycerophospholipid metabolism.</text>
</comment>
<comment type="subcellular location">
    <subcellularLocation>
        <location evidence="1">Cytoplasm</location>
    </subcellularLocation>
</comment>
<comment type="similarity">
    <text evidence="1">Belongs to the NAD-dependent glycerol-3-phosphate dehydrogenase family.</text>
</comment>
<proteinExistence type="inferred from homology"/>
<feature type="chain" id="PRO_1000190129" description="Glycerol-3-phosphate dehydrogenase [NAD(P)+]">
    <location>
        <begin position="1"/>
        <end position="332"/>
    </location>
</feature>
<feature type="active site" description="Proton acceptor" evidence="1">
    <location>
        <position position="191"/>
    </location>
</feature>
<feature type="binding site" evidence="1">
    <location>
        <position position="11"/>
    </location>
    <ligand>
        <name>NADPH</name>
        <dbReference type="ChEBI" id="CHEBI:57783"/>
    </ligand>
</feature>
<feature type="binding site" evidence="1">
    <location>
        <position position="12"/>
    </location>
    <ligand>
        <name>NADPH</name>
        <dbReference type="ChEBI" id="CHEBI:57783"/>
    </ligand>
</feature>
<feature type="binding site" evidence="1">
    <location>
        <position position="32"/>
    </location>
    <ligand>
        <name>NADPH</name>
        <dbReference type="ChEBI" id="CHEBI:57783"/>
    </ligand>
</feature>
<feature type="binding site" evidence="1">
    <location>
        <position position="33"/>
    </location>
    <ligand>
        <name>NADPH</name>
        <dbReference type="ChEBI" id="CHEBI:57783"/>
    </ligand>
</feature>
<feature type="binding site" evidence="1">
    <location>
        <position position="106"/>
    </location>
    <ligand>
        <name>NADPH</name>
        <dbReference type="ChEBI" id="CHEBI:57783"/>
    </ligand>
</feature>
<feature type="binding site" evidence="1">
    <location>
        <position position="106"/>
    </location>
    <ligand>
        <name>sn-glycerol 3-phosphate</name>
        <dbReference type="ChEBI" id="CHEBI:57597"/>
    </ligand>
</feature>
<feature type="binding site" evidence="1">
    <location>
        <position position="136"/>
    </location>
    <ligand>
        <name>sn-glycerol 3-phosphate</name>
        <dbReference type="ChEBI" id="CHEBI:57597"/>
    </ligand>
</feature>
<feature type="binding site" evidence="1">
    <location>
        <position position="140"/>
    </location>
    <ligand>
        <name>NADPH</name>
        <dbReference type="ChEBI" id="CHEBI:57783"/>
    </ligand>
</feature>
<feature type="binding site" evidence="1">
    <location>
        <position position="191"/>
    </location>
    <ligand>
        <name>sn-glycerol 3-phosphate</name>
        <dbReference type="ChEBI" id="CHEBI:57597"/>
    </ligand>
</feature>
<feature type="binding site" evidence="1">
    <location>
        <position position="244"/>
    </location>
    <ligand>
        <name>sn-glycerol 3-phosphate</name>
        <dbReference type="ChEBI" id="CHEBI:57597"/>
    </ligand>
</feature>
<feature type="binding site" evidence="1">
    <location>
        <position position="254"/>
    </location>
    <ligand>
        <name>sn-glycerol 3-phosphate</name>
        <dbReference type="ChEBI" id="CHEBI:57597"/>
    </ligand>
</feature>
<feature type="binding site" evidence="1">
    <location>
        <position position="255"/>
    </location>
    <ligand>
        <name>NADPH</name>
        <dbReference type="ChEBI" id="CHEBI:57783"/>
    </ligand>
</feature>
<feature type="binding site" evidence="1">
    <location>
        <position position="255"/>
    </location>
    <ligand>
        <name>sn-glycerol 3-phosphate</name>
        <dbReference type="ChEBI" id="CHEBI:57597"/>
    </ligand>
</feature>
<feature type="binding site" evidence="1">
    <location>
        <position position="256"/>
    </location>
    <ligand>
        <name>sn-glycerol 3-phosphate</name>
        <dbReference type="ChEBI" id="CHEBI:57597"/>
    </ligand>
</feature>
<feature type="binding site" evidence="1">
    <location>
        <position position="280"/>
    </location>
    <ligand>
        <name>NADPH</name>
        <dbReference type="ChEBI" id="CHEBI:57783"/>
    </ligand>
</feature>
<feature type="binding site" evidence="1">
    <location>
        <position position="282"/>
    </location>
    <ligand>
        <name>NADPH</name>
        <dbReference type="ChEBI" id="CHEBI:57783"/>
    </ligand>
</feature>
<name>GPDA_CORA7</name>
<protein>
    <recommendedName>
        <fullName evidence="1">Glycerol-3-phosphate dehydrogenase [NAD(P)+]</fullName>
        <ecNumber evidence="1">1.1.1.94</ecNumber>
    </recommendedName>
    <alternativeName>
        <fullName evidence="1">NAD(P)(+)-dependent glycerol-3-phosphate dehydrogenase</fullName>
    </alternativeName>
    <alternativeName>
        <fullName evidence="1">NAD(P)H-dependent dihydroxyacetone-phosphate reductase</fullName>
    </alternativeName>
</protein>